<name>Y4410_PSEPF</name>
<dbReference type="EMBL" id="CP000094">
    <property type="protein sequence ID" value="ABA76147.1"/>
    <property type="molecule type" value="Genomic_DNA"/>
</dbReference>
<dbReference type="RefSeq" id="WP_003227527.1">
    <property type="nucleotide sequence ID" value="NC_007492.2"/>
</dbReference>
<dbReference type="SMR" id="Q3K7V7"/>
<dbReference type="KEGG" id="pfo:Pfl01_4410"/>
<dbReference type="eggNOG" id="COG0217">
    <property type="taxonomic scope" value="Bacteria"/>
</dbReference>
<dbReference type="HOGENOM" id="CLU_062974_2_2_6"/>
<dbReference type="Proteomes" id="UP000002704">
    <property type="component" value="Chromosome"/>
</dbReference>
<dbReference type="GO" id="GO:0005829">
    <property type="term" value="C:cytosol"/>
    <property type="evidence" value="ECO:0007669"/>
    <property type="project" value="TreeGrafter"/>
</dbReference>
<dbReference type="GO" id="GO:0003677">
    <property type="term" value="F:DNA binding"/>
    <property type="evidence" value="ECO:0007669"/>
    <property type="project" value="UniProtKB-UniRule"/>
</dbReference>
<dbReference type="GO" id="GO:0006355">
    <property type="term" value="P:regulation of DNA-templated transcription"/>
    <property type="evidence" value="ECO:0007669"/>
    <property type="project" value="UniProtKB-UniRule"/>
</dbReference>
<dbReference type="FunFam" id="1.10.10.200:FF:000001">
    <property type="entry name" value="Probable transcriptional regulatory protein YebC"/>
    <property type="match status" value="1"/>
</dbReference>
<dbReference type="FunFam" id="3.30.70.980:FF:000002">
    <property type="entry name" value="Probable transcriptional regulatory protein YebC"/>
    <property type="match status" value="1"/>
</dbReference>
<dbReference type="Gene3D" id="1.10.10.200">
    <property type="match status" value="1"/>
</dbReference>
<dbReference type="Gene3D" id="3.30.70.980">
    <property type="match status" value="2"/>
</dbReference>
<dbReference type="HAMAP" id="MF_00693">
    <property type="entry name" value="Transcrip_reg_TACO1"/>
    <property type="match status" value="1"/>
</dbReference>
<dbReference type="InterPro" id="IPR017856">
    <property type="entry name" value="Integrase-like_N"/>
</dbReference>
<dbReference type="InterPro" id="IPR048300">
    <property type="entry name" value="TACO1_YebC-like_2nd/3rd_dom"/>
</dbReference>
<dbReference type="InterPro" id="IPR049083">
    <property type="entry name" value="TACO1_YebC_N"/>
</dbReference>
<dbReference type="InterPro" id="IPR002876">
    <property type="entry name" value="Transcrip_reg_TACO1-like"/>
</dbReference>
<dbReference type="InterPro" id="IPR026564">
    <property type="entry name" value="Transcrip_reg_TACO1-like_dom3"/>
</dbReference>
<dbReference type="InterPro" id="IPR029072">
    <property type="entry name" value="YebC-like"/>
</dbReference>
<dbReference type="NCBIfam" id="NF001030">
    <property type="entry name" value="PRK00110.1"/>
    <property type="match status" value="1"/>
</dbReference>
<dbReference type="NCBIfam" id="NF009044">
    <property type="entry name" value="PRK12378.1"/>
    <property type="match status" value="1"/>
</dbReference>
<dbReference type="NCBIfam" id="TIGR01033">
    <property type="entry name" value="YebC/PmpR family DNA-binding transcriptional regulator"/>
    <property type="match status" value="1"/>
</dbReference>
<dbReference type="PANTHER" id="PTHR12532:SF6">
    <property type="entry name" value="TRANSCRIPTIONAL REGULATORY PROTEIN YEBC-RELATED"/>
    <property type="match status" value="1"/>
</dbReference>
<dbReference type="PANTHER" id="PTHR12532">
    <property type="entry name" value="TRANSLATIONAL ACTIVATOR OF CYTOCHROME C OXIDASE 1"/>
    <property type="match status" value="1"/>
</dbReference>
<dbReference type="Pfam" id="PF20772">
    <property type="entry name" value="TACO1_YebC_N"/>
    <property type="match status" value="1"/>
</dbReference>
<dbReference type="Pfam" id="PF01709">
    <property type="entry name" value="Transcrip_reg"/>
    <property type="match status" value="1"/>
</dbReference>
<dbReference type="SUPFAM" id="SSF75625">
    <property type="entry name" value="YebC-like"/>
    <property type="match status" value="1"/>
</dbReference>
<organism>
    <name type="scientific">Pseudomonas fluorescens (strain Pf0-1)</name>
    <dbReference type="NCBI Taxonomy" id="205922"/>
    <lineage>
        <taxon>Bacteria</taxon>
        <taxon>Pseudomonadati</taxon>
        <taxon>Pseudomonadota</taxon>
        <taxon>Gammaproteobacteria</taxon>
        <taxon>Pseudomonadales</taxon>
        <taxon>Pseudomonadaceae</taxon>
        <taxon>Pseudomonas</taxon>
    </lineage>
</organism>
<proteinExistence type="inferred from homology"/>
<evidence type="ECO:0000255" key="1">
    <source>
        <dbReference type="HAMAP-Rule" id="MF_00693"/>
    </source>
</evidence>
<keyword id="KW-0963">Cytoplasm</keyword>
<keyword id="KW-0238">DNA-binding</keyword>
<keyword id="KW-0804">Transcription</keyword>
<keyword id="KW-0805">Transcription regulation</keyword>
<feature type="chain" id="PRO_0000257103" description="Probable transcriptional regulatory protein Pfl01_4410">
    <location>
        <begin position="1"/>
        <end position="248"/>
    </location>
</feature>
<reference key="1">
    <citation type="journal article" date="2009" name="Genome Biol.">
        <title>Genomic and genetic analyses of diversity and plant interactions of Pseudomonas fluorescens.</title>
        <authorList>
            <person name="Silby M.W."/>
            <person name="Cerdeno-Tarraga A.M."/>
            <person name="Vernikos G.S."/>
            <person name="Giddens S.R."/>
            <person name="Jackson R.W."/>
            <person name="Preston G.M."/>
            <person name="Zhang X.-X."/>
            <person name="Moon C.D."/>
            <person name="Gehrig S.M."/>
            <person name="Godfrey S.A.C."/>
            <person name="Knight C.G."/>
            <person name="Malone J.G."/>
            <person name="Robinson Z."/>
            <person name="Spiers A.J."/>
            <person name="Harris S."/>
            <person name="Challis G.L."/>
            <person name="Yaxley A.M."/>
            <person name="Harris D."/>
            <person name="Seeger K."/>
            <person name="Murphy L."/>
            <person name="Rutter S."/>
            <person name="Squares R."/>
            <person name="Quail M.A."/>
            <person name="Saunders E."/>
            <person name="Mavromatis K."/>
            <person name="Brettin T.S."/>
            <person name="Bentley S.D."/>
            <person name="Hothersall J."/>
            <person name="Stephens E."/>
            <person name="Thomas C.M."/>
            <person name="Parkhill J."/>
            <person name="Levy S.B."/>
            <person name="Rainey P.B."/>
            <person name="Thomson N.R."/>
        </authorList>
    </citation>
    <scope>NUCLEOTIDE SEQUENCE [LARGE SCALE GENOMIC DNA]</scope>
    <source>
        <strain>Pf0-1</strain>
    </source>
</reference>
<comment type="subcellular location">
    <subcellularLocation>
        <location evidence="1">Cytoplasm</location>
    </subcellularLocation>
</comment>
<comment type="similarity">
    <text evidence="1">Belongs to the TACO1 family.</text>
</comment>
<protein>
    <recommendedName>
        <fullName evidence="1">Probable transcriptional regulatory protein Pfl01_4410</fullName>
    </recommendedName>
</protein>
<sequence>MAGHSKWANIKHRKERQDAKRGKIFTKWIRELTVAARQGGGDPGSNPRLRLALDKALGANMSRDIIDRAVARGAGATEADNVEELTYEGYGPGGVAVMVECMTDNRNRTAAAVRHAFSKCGGNLGTDGSVAYLFERKGQISFAPGVDEDALTEAALEADADDVVSHEDGSIDVFTSFTSFYAVRNALEAAGFKGDDAEIVMQPTTSAELDLEGAEKVLKLIDMLEDLDDVQNVYSNADIPEDVAAQLG</sequence>
<accession>Q3K7V7</accession>
<gene>
    <name type="ordered locus">Pfl01_4410</name>
</gene>